<comment type="subcellular location">
    <subcellularLocation>
        <location evidence="5">Membrane</location>
        <topology evidence="5">Multi-pass membrane protein</topology>
    </subcellularLocation>
</comment>
<comment type="alternative products">
    <event type="alternative splicing"/>
    <isoform>
        <id>Q8N816-1</id>
        <name>1</name>
        <sequence type="displayed"/>
    </isoform>
    <isoform>
        <id>Q8N816-2</id>
        <name>2</name>
        <sequence type="described" ref="VSP_035635"/>
    </isoform>
</comment>
<sequence length="258" mass="27975">MVGILPLCCSGCVPSLCCSSYVPSVAPTAAHSVRVPHSAGHCGQRVLACSLPQVFLKPWIFVEHFSSWLSLELFSFLRYLGTLLCACGHRLREGLLLPCLLGVGSWLLFNNWTGGSWFSLHLQQVSLSQGSHVAAFLPEAIGPGVPVPVSGESTSAQQSHAGWQLSAEADACPSVLYSEVLEWNKNINTYTSFHDFCLILGIFLFCFVLAVIGLPYIKPGLSLSVALLWQSLILLSSLVQQDSQVHTWGCLFSTFTST</sequence>
<organism>
    <name type="scientific">Homo sapiens</name>
    <name type="common">Human</name>
    <dbReference type="NCBI Taxonomy" id="9606"/>
    <lineage>
        <taxon>Eukaryota</taxon>
        <taxon>Metazoa</taxon>
        <taxon>Chordata</taxon>
        <taxon>Craniata</taxon>
        <taxon>Vertebrata</taxon>
        <taxon>Euteleostomi</taxon>
        <taxon>Mammalia</taxon>
        <taxon>Eutheria</taxon>
        <taxon>Euarchontoglires</taxon>
        <taxon>Primates</taxon>
        <taxon>Haplorrhini</taxon>
        <taxon>Catarrhini</taxon>
        <taxon>Hominidae</taxon>
        <taxon>Homo</taxon>
    </lineage>
</organism>
<dbReference type="EMBL" id="AK097454">
    <property type="protein sequence ID" value="BAC05059.1"/>
    <property type="molecule type" value="mRNA"/>
</dbReference>
<dbReference type="EMBL" id="AK298616">
    <property type="protein sequence ID" value="BAG60796.1"/>
    <property type="molecule type" value="mRNA"/>
</dbReference>
<dbReference type="EMBL" id="CH471152">
    <property type="protein sequence ID" value="EAW60682.1"/>
    <property type="molecule type" value="Genomic_DNA"/>
</dbReference>
<dbReference type="EMBL" id="BC015365">
    <property type="protein sequence ID" value="AAH15365.1"/>
    <property type="molecule type" value="mRNA"/>
</dbReference>
<dbReference type="RefSeq" id="NP_001182315.1">
    <property type="nucleotide sequence ID" value="NM_001195386.1"/>
</dbReference>
<dbReference type="RefSeq" id="NP_001182316.1">
    <property type="nucleotide sequence ID" value="NM_001195387.1"/>
</dbReference>
<dbReference type="RefSeq" id="NP_660317.2">
    <property type="nucleotide sequence ID" value="NM_145274.3"/>
</dbReference>
<dbReference type="RefSeq" id="XP_005257146.1">
    <property type="nucleotide sequence ID" value="XM_005257089.4"/>
</dbReference>
<dbReference type="RefSeq" id="XP_016879742.1">
    <property type="nucleotide sequence ID" value="XM_017024253.1"/>
</dbReference>
<dbReference type="FunCoup" id="Q8N816">
    <property type="interactions" value="1"/>
</dbReference>
<dbReference type="IntAct" id="Q8N816">
    <property type="interactions" value="1"/>
</dbReference>
<dbReference type="GlyGen" id="Q8N816">
    <property type="glycosylation" value="1 site"/>
</dbReference>
<dbReference type="BioMuta" id="TMEM99"/>
<dbReference type="DMDM" id="212276470"/>
<dbReference type="MassIVE" id="Q8N816"/>
<dbReference type="PaxDb" id="9606-ENSP00000482364"/>
<dbReference type="PeptideAtlas" id="Q8N816"/>
<dbReference type="TopDownProteomics" id="Q8N816-2">
    <molecule id="Q8N816-2"/>
</dbReference>
<dbReference type="UCSC" id="uc002hvj.2">
    <molecule id="Q8N816-1"/>
    <property type="organism name" value="human"/>
</dbReference>
<dbReference type="AGR" id="HGNC:28305"/>
<dbReference type="GeneCards" id="KRT10-AS1"/>
<dbReference type="HGNC" id="HGNC:28305">
    <property type="gene designation" value="KRT10-AS1"/>
</dbReference>
<dbReference type="MalaCards" id="KRT10-AS1"/>
<dbReference type="neXtProt" id="NX_Q8N816"/>
<dbReference type="eggNOG" id="ENOG502R1CC">
    <property type="taxonomic scope" value="Eukaryota"/>
</dbReference>
<dbReference type="HOGENOM" id="CLU_097763_0_0_1"/>
<dbReference type="InParanoid" id="Q8N816"/>
<dbReference type="PAN-GO" id="Q8N816">
    <property type="GO annotations" value="0 GO annotations based on evolutionary models"/>
</dbReference>
<dbReference type="PhylomeDB" id="Q8N816"/>
<dbReference type="PathwayCommons" id="Q8N816"/>
<dbReference type="SignaLink" id="Q8N816"/>
<dbReference type="BioGRID-ORCS" id="147184">
    <property type="hits" value="13 hits in 1164 CRISPR screens"/>
</dbReference>
<dbReference type="GenomeRNAi" id="147184"/>
<dbReference type="Pharos" id="Q8N816">
    <property type="development level" value="Tdark"/>
</dbReference>
<dbReference type="PRO" id="PR:Q8N816"/>
<dbReference type="Proteomes" id="UP000005640">
    <property type="component" value="Unplaced"/>
</dbReference>
<dbReference type="RNAct" id="Q8N816">
    <property type="molecule type" value="protein"/>
</dbReference>
<dbReference type="GO" id="GO:0016020">
    <property type="term" value="C:membrane"/>
    <property type="evidence" value="ECO:0007669"/>
    <property type="project" value="UniProtKB-SubCell"/>
</dbReference>
<accession>Q8N816</accession>
<accession>B4DQ34</accession>
<accession>Q96BP9</accession>
<evidence type="ECO:0000255" key="1"/>
<evidence type="ECO:0000269" key="2">
    <source>
    </source>
</evidence>
<evidence type="ECO:0000303" key="3">
    <source>
    </source>
</evidence>
<evidence type="ECO:0000303" key="4">
    <source>
    </source>
</evidence>
<evidence type="ECO:0000305" key="5"/>
<evidence type="ECO:0000312" key="6">
    <source>
        <dbReference type="HGNC" id="HGNC:28305"/>
    </source>
</evidence>
<feature type="signal peptide" evidence="1">
    <location>
        <begin position="1"/>
        <end position="19"/>
    </location>
</feature>
<feature type="chain" id="PRO_0000254551" description="Uncharacterized protein KRT10-AS1">
    <location>
        <begin position="20"/>
        <end position="258"/>
    </location>
</feature>
<feature type="transmembrane region" description="Helical" evidence="1">
    <location>
        <begin position="94"/>
        <end position="114"/>
    </location>
</feature>
<feature type="transmembrane region" description="Helical" evidence="1">
    <location>
        <begin position="197"/>
        <end position="217"/>
    </location>
</feature>
<feature type="transmembrane region" description="Helical" evidence="1">
    <location>
        <begin position="219"/>
        <end position="239"/>
    </location>
</feature>
<feature type="splice variant" id="VSP_035635" description="In isoform 2." evidence="3 4">
    <location>
        <begin position="190"/>
        <end position="258"/>
    </location>
</feature>
<feature type="sequence variant" id="VAR_028835" description="In dbSNP:rs17474506.">
    <original>I</original>
    <variation>M</variation>
    <location>
        <position position="4"/>
    </location>
</feature>
<feature type="sequence variant" id="VAR_028836" description="In dbSNP:rs10558.">
    <original>Y</original>
    <variation>H</variation>
    <location>
        <position position="79"/>
    </location>
</feature>
<feature type="sequence variant" id="VAR_028837" description="In dbSNP:rs1044806." evidence="2">
    <original>L</original>
    <variation>R</variation>
    <location>
        <position position="95"/>
    </location>
</feature>
<gene>
    <name evidence="6" type="primary">KRT10-AS1</name>
    <name type="synonym">TMEM99</name>
</gene>
<protein>
    <recommendedName>
        <fullName evidence="6">Uncharacterized protein KRT10-AS1</fullName>
    </recommendedName>
    <alternativeName>
        <fullName>Transmembrane protein 99</fullName>
    </alternativeName>
</protein>
<keyword id="KW-0025">Alternative splicing</keyword>
<keyword id="KW-0472">Membrane</keyword>
<keyword id="KW-1185">Reference proteome</keyword>
<keyword id="KW-0732">Signal</keyword>
<keyword id="KW-0812">Transmembrane</keyword>
<keyword id="KW-1133">Transmembrane helix</keyword>
<proteinExistence type="evidence at transcript level"/>
<reference key="1">
    <citation type="journal article" date="2004" name="Nat. Genet.">
        <title>Complete sequencing and characterization of 21,243 full-length human cDNAs.</title>
        <authorList>
            <person name="Ota T."/>
            <person name="Suzuki Y."/>
            <person name="Nishikawa T."/>
            <person name="Otsuki T."/>
            <person name="Sugiyama T."/>
            <person name="Irie R."/>
            <person name="Wakamatsu A."/>
            <person name="Hayashi K."/>
            <person name="Sato H."/>
            <person name="Nagai K."/>
            <person name="Kimura K."/>
            <person name="Makita H."/>
            <person name="Sekine M."/>
            <person name="Obayashi M."/>
            <person name="Nishi T."/>
            <person name="Shibahara T."/>
            <person name="Tanaka T."/>
            <person name="Ishii S."/>
            <person name="Yamamoto J."/>
            <person name="Saito K."/>
            <person name="Kawai Y."/>
            <person name="Isono Y."/>
            <person name="Nakamura Y."/>
            <person name="Nagahari K."/>
            <person name="Murakami K."/>
            <person name="Yasuda T."/>
            <person name="Iwayanagi T."/>
            <person name="Wagatsuma M."/>
            <person name="Shiratori A."/>
            <person name="Sudo H."/>
            <person name="Hosoiri T."/>
            <person name="Kaku Y."/>
            <person name="Kodaira H."/>
            <person name="Kondo H."/>
            <person name="Sugawara M."/>
            <person name="Takahashi M."/>
            <person name="Kanda K."/>
            <person name="Yokoi T."/>
            <person name="Furuya T."/>
            <person name="Kikkawa E."/>
            <person name="Omura Y."/>
            <person name="Abe K."/>
            <person name="Kamihara K."/>
            <person name="Katsuta N."/>
            <person name="Sato K."/>
            <person name="Tanikawa M."/>
            <person name="Yamazaki M."/>
            <person name="Ninomiya K."/>
            <person name="Ishibashi T."/>
            <person name="Yamashita H."/>
            <person name="Murakawa K."/>
            <person name="Fujimori K."/>
            <person name="Tanai H."/>
            <person name="Kimata M."/>
            <person name="Watanabe M."/>
            <person name="Hiraoka S."/>
            <person name="Chiba Y."/>
            <person name="Ishida S."/>
            <person name="Ono Y."/>
            <person name="Takiguchi S."/>
            <person name="Watanabe S."/>
            <person name="Yosida M."/>
            <person name="Hotuta T."/>
            <person name="Kusano J."/>
            <person name="Kanehori K."/>
            <person name="Takahashi-Fujii A."/>
            <person name="Hara H."/>
            <person name="Tanase T.-O."/>
            <person name="Nomura Y."/>
            <person name="Togiya S."/>
            <person name="Komai F."/>
            <person name="Hara R."/>
            <person name="Takeuchi K."/>
            <person name="Arita M."/>
            <person name="Imose N."/>
            <person name="Musashino K."/>
            <person name="Yuuki H."/>
            <person name="Oshima A."/>
            <person name="Sasaki N."/>
            <person name="Aotsuka S."/>
            <person name="Yoshikawa Y."/>
            <person name="Matsunawa H."/>
            <person name="Ichihara T."/>
            <person name="Shiohata N."/>
            <person name="Sano S."/>
            <person name="Moriya S."/>
            <person name="Momiyama H."/>
            <person name="Satoh N."/>
            <person name="Takami S."/>
            <person name="Terashima Y."/>
            <person name="Suzuki O."/>
            <person name="Nakagawa S."/>
            <person name="Senoh A."/>
            <person name="Mizoguchi H."/>
            <person name="Goto Y."/>
            <person name="Shimizu F."/>
            <person name="Wakebe H."/>
            <person name="Hishigaki H."/>
            <person name="Watanabe T."/>
            <person name="Sugiyama A."/>
            <person name="Takemoto M."/>
            <person name="Kawakami B."/>
            <person name="Yamazaki M."/>
            <person name="Watanabe K."/>
            <person name="Kumagai A."/>
            <person name="Itakura S."/>
            <person name="Fukuzumi Y."/>
            <person name="Fujimori Y."/>
            <person name="Komiyama M."/>
            <person name="Tashiro H."/>
            <person name="Tanigami A."/>
            <person name="Fujiwara T."/>
            <person name="Ono T."/>
            <person name="Yamada K."/>
            <person name="Fujii Y."/>
            <person name="Ozaki K."/>
            <person name="Hirao M."/>
            <person name="Ohmori Y."/>
            <person name="Kawabata A."/>
            <person name="Hikiji T."/>
            <person name="Kobatake N."/>
            <person name="Inagaki H."/>
            <person name="Ikema Y."/>
            <person name="Okamoto S."/>
            <person name="Okitani R."/>
            <person name="Kawakami T."/>
            <person name="Noguchi S."/>
            <person name="Itoh T."/>
            <person name="Shigeta K."/>
            <person name="Senba T."/>
            <person name="Matsumura K."/>
            <person name="Nakajima Y."/>
            <person name="Mizuno T."/>
            <person name="Morinaga M."/>
            <person name="Sasaki M."/>
            <person name="Togashi T."/>
            <person name="Oyama M."/>
            <person name="Hata H."/>
            <person name="Watanabe M."/>
            <person name="Komatsu T."/>
            <person name="Mizushima-Sugano J."/>
            <person name="Satoh T."/>
            <person name="Shirai Y."/>
            <person name="Takahashi Y."/>
            <person name="Nakagawa K."/>
            <person name="Okumura K."/>
            <person name="Nagase T."/>
            <person name="Nomura N."/>
            <person name="Kikuchi H."/>
            <person name="Masuho Y."/>
            <person name="Yamashita R."/>
            <person name="Nakai K."/>
            <person name="Yada T."/>
            <person name="Nakamura Y."/>
            <person name="Ohara O."/>
            <person name="Isogai T."/>
            <person name="Sugano S."/>
        </authorList>
    </citation>
    <scope>NUCLEOTIDE SEQUENCE [LARGE SCALE MRNA] (ISOFORMS 1 AND 2)</scope>
    <source>
        <tissue>Testis</tissue>
    </source>
</reference>
<reference key="2">
    <citation type="submission" date="2005-07" db="EMBL/GenBank/DDBJ databases">
        <authorList>
            <person name="Mural R.J."/>
            <person name="Istrail S."/>
            <person name="Sutton G.G."/>
            <person name="Florea L."/>
            <person name="Halpern A.L."/>
            <person name="Mobarry C.M."/>
            <person name="Lippert R."/>
            <person name="Walenz B."/>
            <person name="Shatkay H."/>
            <person name="Dew I."/>
            <person name="Miller J.R."/>
            <person name="Flanigan M.J."/>
            <person name="Edwards N.J."/>
            <person name="Bolanos R."/>
            <person name="Fasulo D."/>
            <person name="Halldorsson B.V."/>
            <person name="Hannenhalli S."/>
            <person name="Turner R."/>
            <person name="Yooseph S."/>
            <person name="Lu F."/>
            <person name="Nusskern D.R."/>
            <person name="Shue B.C."/>
            <person name="Zheng X.H."/>
            <person name="Zhong F."/>
            <person name="Delcher A.L."/>
            <person name="Huson D.H."/>
            <person name="Kravitz S.A."/>
            <person name="Mouchard L."/>
            <person name="Reinert K."/>
            <person name="Remington K.A."/>
            <person name="Clark A.G."/>
            <person name="Waterman M.S."/>
            <person name="Eichler E.E."/>
            <person name="Adams M.D."/>
            <person name="Hunkapiller M.W."/>
            <person name="Myers E.W."/>
            <person name="Venter J.C."/>
        </authorList>
    </citation>
    <scope>NUCLEOTIDE SEQUENCE [LARGE SCALE GENOMIC DNA]</scope>
</reference>
<reference key="3">
    <citation type="journal article" date="2004" name="Genome Res.">
        <title>The status, quality, and expansion of the NIH full-length cDNA project: the Mammalian Gene Collection (MGC).</title>
        <authorList>
            <consortium name="The MGC Project Team"/>
        </authorList>
    </citation>
    <scope>NUCLEOTIDE SEQUENCE [LARGE SCALE MRNA] (ISOFORM 2)</scope>
    <scope>VARIANT ARG-95</scope>
    <source>
        <tissue>Pancreas</tissue>
    </source>
</reference>
<name>TMM99_HUMAN</name>